<feature type="chain" id="PRO_1000009095" description="Phosphoheptose isomerase">
    <location>
        <begin position="1"/>
        <end position="192"/>
    </location>
</feature>
<feature type="domain" description="SIS" evidence="1">
    <location>
        <begin position="37"/>
        <end position="192"/>
    </location>
</feature>
<feature type="binding site" evidence="1">
    <location>
        <begin position="52"/>
        <end position="54"/>
    </location>
    <ligand>
        <name>substrate</name>
    </ligand>
</feature>
<feature type="binding site" evidence="1">
    <location>
        <position position="61"/>
    </location>
    <ligand>
        <name>Zn(2+)</name>
        <dbReference type="ChEBI" id="CHEBI:29105"/>
    </ligand>
</feature>
<feature type="binding site" evidence="1">
    <location>
        <position position="65"/>
    </location>
    <ligand>
        <name>substrate</name>
    </ligand>
</feature>
<feature type="binding site" evidence="1">
    <location>
        <position position="65"/>
    </location>
    <ligand>
        <name>Zn(2+)</name>
        <dbReference type="ChEBI" id="CHEBI:29105"/>
    </ligand>
</feature>
<feature type="binding site" evidence="1">
    <location>
        <begin position="93"/>
        <end position="94"/>
    </location>
    <ligand>
        <name>substrate</name>
    </ligand>
</feature>
<feature type="binding site" evidence="1">
    <location>
        <begin position="119"/>
        <end position="121"/>
    </location>
    <ligand>
        <name>substrate</name>
    </ligand>
</feature>
<feature type="binding site" evidence="1">
    <location>
        <position position="124"/>
    </location>
    <ligand>
        <name>substrate</name>
    </ligand>
</feature>
<feature type="binding site" evidence="1">
    <location>
        <position position="172"/>
    </location>
    <ligand>
        <name>substrate</name>
    </ligand>
</feature>
<feature type="binding site" evidence="1">
    <location>
        <position position="172"/>
    </location>
    <ligand>
        <name>Zn(2+)</name>
        <dbReference type="ChEBI" id="CHEBI:29105"/>
    </ligand>
</feature>
<feature type="binding site" evidence="1">
    <location>
        <position position="180"/>
    </location>
    <ligand>
        <name>Zn(2+)</name>
        <dbReference type="ChEBI" id="CHEBI:29105"/>
    </ligand>
</feature>
<sequence>MYQDLIRNELNEAAETLANFLKDDANIHAIQRAAVLLADSFKAGGKVLSCGNGGSHCDAMHFAEELTGRYRENRPGYPAIAISDVSHISCVSNDFGYDYIFSRYVEAVGREGDVLLGISTSGNSGNVIKAIAAAREKGMKVITLTGKDGGKMAGTADIEIRVPHFGYADRIQEIHIKVIHILIQLIEKEMVK</sequence>
<reference key="1">
    <citation type="journal article" date="2004" name="Nat. Genet.">
        <title>Comparison of genome degradation in Paratyphi A and Typhi, human-restricted serovars of Salmonella enterica that cause typhoid.</title>
        <authorList>
            <person name="McClelland M."/>
            <person name="Sanderson K.E."/>
            <person name="Clifton S.W."/>
            <person name="Latreille P."/>
            <person name="Porwollik S."/>
            <person name="Sabo A."/>
            <person name="Meyer R."/>
            <person name="Bieri T."/>
            <person name="Ozersky P."/>
            <person name="McLellan M."/>
            <person name="Harkins C.R."/>
            <person name="Wang C."/>
            <person name="Nguyen C."/>
            <person name="Berghoff A."/>
            <person name="Elliott G."/>
            <person name="Kohlberg S."/>
            <person name="Strong C."/>
            <person name="Du F."/>
            <person name="Carter J."/>
            <person name="Kremizki C."/>
            <person name="Layman D."/>
            <person name="Leonard S."/>
            <person name="Sun H."/>
            <person name="Fulton L."/>
            <person name="Nash W."/>
            <person name="Miner T."/>
            <person name="Minx P."/>
            <person name="Delehaunty K."/>
            <person name="Fronick C."/>
            <person name="Magrini V."/>
            <person name="Nhan M."/>
            <person name="Warren W."/>
            <person name="Florea L."/>
            <person name="Spieth J."/>
            <person name="Wilson R.K."/>
        </authorList>
    </citation>
    <scope>NUCLEOTIDE SEQUENCE [LARGE SCALE GENOMIC DNA]</scope>
    <source>
        <strain>ATCC 9150 / SARB42</strain>
    </source>
</reference>
<accession>Q5PF73</accession>
<proteinExistence type="inferred from homology"/>
<dbReference type="EC" id="5.3.1.28" evidence="1"/>
<dbReference type="EMBL" id="CP000026">
    <property type="protein sequence ID" value="AAV78325.1"/>
    <property type="molecule type" value="Genomic_DNA"/>
</dbReference>
<dbReference type="SMR" id="Q5PF73"/>
<dbReference type="KEGG" id="spt:SPA2445"/>
<dbReference type="HOGENOM" id="CLU_080999_4_0_6"/>
<dbReference type="UniPathway" id="UPA00041">
    <property type="reaction ID" value="UER00436"/>
</dbReference>
<dbReference type="Proteomes" id="UP000008185">
    <property type="component" value="Chromosome"/>
</dbReference>
<dbReference type="GO" id="GO:0005737">
    <property type="term" value="C:cytoplasm"/>
    <property type="evidence" value="ECO:0007669"/>
    <property type="project" value="UniProtKB-SubCell"/>
</dbReference>
<dbReference type="GO" id="GO:0097367">
    <property type="term" value="F:carbohydrate derivative binding"/>
    <property type="evidence" value="ECO:0007669"/>
    <property type="project" value="InterPro"/>
</dbReference>
<dbReference type="GO" id="GO:0008968">
    <property type="term" value="F:D-sedoheptulose 7-phosphate isomerase activity"/>
    <property type="evidence" value="ECO:0007669"/>
    <property type="project" value="UniProtKB-UniRule"/>
</dbReference>
<dbReference type="GO" id="GO:0008270">
    <property type="term" value="F:zinc ion binding"/>
    <property type="evidence" value="ECO:0007669"/>
    <property type="project" value="UniProtKB-UniRule"/>
</dbReference>
<dbReference type="GO" id="GO:0005975">
    <property type="term" value="P:carbohydrate metabolic process"/>
    <property type="evidence" value="ECO:0007669"/>
    <property type="project" value="UniProtKB-UniRule"/>
</dbReference>
<dbReference type="GO" id="GO:2001061">
    <property type="term" value="P:D-glycero-D-manno-heptose 7-phosphate biosynthetic process"/>
    <property type="evidence" value="ECO:0007669"/>
    <property type="project" value="UniProtKB-UniPathway"/>
</dbReference>
<dbReference type="CDD" id="cd05006">
    <property type="entry name" value="SIS_GmhA"/>
    <property type="match status" value="1"/>
</dbReference>
<dbReference type="FunFam" id="3.40.50.10490:FF:000013">
    <property type="entry name" value="Phosphoheptose isomerase"/>
    <property type="match status" value="1"/>
</dbReference>
<dbReference type="Gene3D" id="3.40.50.10490">
    <property type="entry name" value="Glucose-6-phosphate isomerase like protein, domain 1"/>
    <property type="match status" value="1"/>
</dbReference>
<dbReference type="HAMAP" id="MF_00067">
    <property type="entry name" value="GmhA"/>
    <property type="match status" value="1"/>
</dbReference>
<dbReference type="InterPro" id="IPR035461">
    <property type="entry name" value="GmhA/DiaA"/>
</dbReference>
<dbReference type="InterPro" id="IPR004515">
    <property type="entry name" value="Phosphoheptose_Isoase"/>
</dbReference>
<dbReference type="InterPro" id="IPR001347">
    <property type="entry name" value="SIS_dom"/>
</dbReference>
<dbReference type="InterPro" id="IPR046348">
    <property type="entry name" value="SIS_dom_sf"/>
</dbReference>
<dbReference type="InterPro" id="IPR050099">
    <property type="entry name" value="SIS_GmhA/DiaA_subfam"/>
</dbReference>
<dbReference type="NCBIfam" id="TIGR00441">
    <property type="entry name" value="gmhA"/>
    <property type="match status" value="1"/>
</dbReference>
<dbReference type="NCBIfam" id="NF001628">
    <property type="entry name" value="PRK00414.1"/>
    <property type="match status" value="1"/>
</dbReference>
<dbReference type="PANTHER" id="PTHR30390:SF7">
    <property type="entry name" value="PHOSPHOHEPTOSE ISOMERASE"/>
    <property type="match status" value="1"/>
</dbReference>
<dbReference type="PANTHER" id="PTHR30390">
    <property type="entry name" value="SEDOHEPTULOSE 7-PHOSPHATE ISOMERASE / DNAA INITIATOR-ASSOCIATING FACTOR FOR REPLICATION INITIATION"/>
    <property type="match status" value="1"/>
</dbReference>
<dbReference type="Pfam" id="PF13580">
    <property type="entry name" value="SIS_2"/>
    <property type="match status" value="1"/>
</dbReference>
<dbReference type="SUPFAM" id="SSF53697">
    <property type="entry name" value="SIS domain"/>
    <property type="match status" value="1"/>
</dbReference>
<dbReference type="PROSITE" id="PS51464">
    <property type="entry name" value="SIS"/>
    <property type="match status" value="1"/>
</dbReference>
<protein>
    <recommendedName>
        <fullName evidence="1">Phosphoheptose isomerase</fullName>
        <ecNumber evidence="1">5.3.1.28</ecNumber>
    </recommendedName>
    <alternativeName>
        <fullName evidence="1">Sedoheptulose 7-phosphate isomerase</fullName>
    </alternativeName>
</protein>
<name>GMHA_SALPA</name>
<gene>
    <name evidence="1" type="primary">gmhA</name>
    <name type="ordered locus">SPA2445</name>
</gene>
<organism>
    <name type="scientific">Salmonella paratyphi A (strain ATCC 9150 / SARB42)</name>
    <dbReference type="NCBI Taxonomy" id="295319"/>
    <lineage>
        <taxon>Bacteria</taxon>
        <taxon>Pseudomonadati</taxon>
        <taxon>Pseudomonadota</taxon>
        <taxon>Gammaproteobacteria</taxon>
        <taxon>Enterobacterales</taxon>
        <taxon>Enterobacteriaceae</taxon>
        <taxon>Salmonella</taxon>
    </lineage>
</organism>
<comment type="function">
    <text evidence="1">Catalyzes the isomerization of sedoheptulose 7-phosphate in D-glycero-D-manno-heptose 7-phosphate.</text>
</comment>
<comment type="catalytic activity">
    <reaction evidence="1">
        <text>2 D-sedoheptulose 7-phosphate = D-glycero-alpha-D-manno-heptose 7-phosphate + D-glycero-beta-D-manno-heptose 7-phosphate</text>
        <dbReference type="Rhea" id="RHEA:27489"/>
        <dbReference type="ChEBI" id="CHEBI:57483"/>
        <dbReference type="ChEBI" id="CHEBI:60203"/>
        <dbReference type="ChEBI" id="CHEBI:60204"/>
        <dbReference type="EC" id="5.3.1.28"/>
    </reaction>
</comment>
<comment type="cofactor">
    <cofactor evidence="1">
        <name>Zn(2+)</name>
        <dbReference type="ChEBI" id="CHEBI:29105"/>
    </cofactor>
    <text evidence="1">Binds 1 zinc ion per subunit.</text>
</comment>
<comment type="pathway">
    <text evidence="1">Carbohydrate biosynthesis; D-glycero-D-manno-heptose 7-phosphate biosynthesis; D-glycero-alpha-D-manno-heptose 7-phosphate and D-glycero-beta-D-manno-heptose 7-phosphate from sedoheptulose 7-phosphate: step 1/1.</text>
</comment>
<comment type="subunit">
    <text evidence="1">Homotetramer.</text>
</comment>
<comment type="subcellular location">
    <subcellularLocation>
        <location evidence="1">Cytoplasm</location>
    </subcellularLocation>
</comment>
<comment type="miscellaneous">
    <text evidence="1">The reaction produces a racemic mixture of D-glycero-alpha-D-manno-heptose 7-phosphate and D-glycero-beta-D-manno-heptose 7-phosphate.</text>
</comment>
<comment type="similarity">
    <text evidence="1">Belongs to the SIS family. GmhA subfamily.</text>
</comment>
<evidence type="ECO:0000255" key="1">
    <source>
        <dbReference type="HAMAP-Rule" id="MF_00067"/>
    </source>
</evidence>
<keyword id="KW-0119">Carbohydrate metabolism</keyword>
<keyword id="KW-0963">Cytoplasm</keyword>
<keyword id="KW-0413">Isomerase</keyword>
<keyword id="KW-0479">Metal-binding</keyword>
<keyword id="KW-0862">Zinc</keyword>